<organism>
    <name type="scientific">Arabidopsis thaliana</name>
    <name type="common">Mouse-ear cress</name>
    <dbReference type="NCBI Taxonomy" id="3702"/>
    <lineage>
        <taxon>Eukaryota</taxon>
        <taxon>Viridiplantae</taxon>
        <taxon>Streptophyta</taxon>
        <taxon>Embryophyta</taxon>
        <taxon>Tracheophyta</taxon>
        <taxon>Spermatophyta</taxon>
        <taxon>Magnoliopsida</taxon>
        <taxon>eudicotyledons</taxon>
        <taxon>Gunneridae</taxon>
        <taxon>Pentapetalae</taxon>
        <taxon>rosids</taxon>
        <taxon>malvids</taxon>
        <taxon>Brassicales</taxon>
        <taxon>Brassicaceae</taxon>
        <taxon>Camelineae</taxon>
        <taxon>Arabidopsis</taxon>
    </lineage>
</organism>
<keyword id="KW-0025">Alternative splicing</keyword>
<keyword id="KW-0067">ATP-binding</keyword>
<keyword id="KW-0418">Kinase</keyword>
<keyword id="KW-0547">Nucleotide-binding</keyword>
<keyword id="KW-1185">Reference proteome</keyword>
<keyword id="KW-0808">Transferase</keyword>
<reference key="1">
    <citation type="submission" date="1996-05" db="EMBL/GenBank/DDBJ databases">
        <title>Characterization of MAP3Ka, a novel MEK kinase gene from Arabidopsis thaliana.</title>
        <authorList>
            <person name="Tregear J.W."/>
        </authorList>
    </citation>
    <scope>NUCLEOTIDE SEQUENCE [MRNA] (ISOFORM 1)</scope>
    <source>
        <strain>cv. Columbia</strain>
        <tissue>Seedling</tissue>
    </source>
</reference>
<reference key="2">
    <citation type="journal article" date="1999" name="Gene">
        <title>Characterisation of novel plant genes encoding MEKK/STE11 and RAF-related protein kinases.</title>
        <authorList>
            <person name="Jouannic S."/>
            <person name="Hamal A."/>
            <person name="Leprince A.-S."/>
            <person name="Tregear J.W."/>
            <person name="Kreis M."/>
            <person name="Henry Y."/>
        </authorList>
    </citation>
    <scope>NUCLEOTIDE SEQUENCE [MRNA] (ISOFORM 4)</scope>
    <scope>TISSUE SPECIFICITY</scope>
    <source>
        <strain>cv. Columbia</strain>
        <tissue>Seedling</tissue>
    </source>
</reference>
<reference key="3">
    <citation type="journal article" date="2000" name="Nature">
        <title>Sequence and analysis of chromosome 1 of the plant Arabidopsis thaliana.</title>
        <authorList>
            <person name="Theologis A."/>
            <person name="Ecker J.R."/>
            <person name="Palm C.J."/>
            <person name="Federspiel N.A."/>
            <person name="Kaul S."/>
            <person name="White O."/>
            <person name="Alonso J."/>
            <person name="Altafi H."/>
            <person name="Araujo R."/>
            <person name="Bowman C.L."/>
            <person name="Brooks S.Y."/>
            <person name="Buehler E."/>
            <person name="Chan A."/>
            <person name="Chao Q."/>
            <person name="Chen H."/>
            <person name="Cheuk R.F."/>
            <person name="Chin C.W."/>
            <person name="Chung M.K."/>
            <person name="Conn L."/>
            <person name="Conway A.B."/>
            <person name="Conway A.R."/>
            <person name="Creasy T.H."/>
            <person name="Dewar K."/>
            <person name="Dunn P."/>
            <person name="Etgu P."/>
            <person name="Feldblyum T.V."/>
            <person name="Feng J.-D."/>
            <person name="Fong B."/>
            <person name="Fujii C.Y."/>
            <person name="Gill J.E."/>
            <person name="Goldsmith A.D."/>
            <person name="Haas B."/>
            <person name="Hansen N.F."/>
            <person name="Hughes B."/>
            <person name="Huizar L."/>
            <person name="Hunter J.L."/>
            <person name="Jenkins J."/>
            <person name="Johnson-Hopson C."/>
            <person name="Khan S."/>
            <person name="Khaykin E."/>
            <person name="Kim C.J."/>
            <person name="Koo H.L."/>
            <person name="Kremenetskaia I."/>
            <person name="Kurtz D.B."/>
            <person name="Kwan A."/>
            <person name="Lam B."/>
            <person name="Langin-Hooper S."/>
            <person name="Lee A."/>
            <person name="Lee J.M."/>
            <person name="Lenz C.A."/>
            <person name="Li J.H."/>
            <person name="Li Y.-P."/>
            <person name="Lin X."/>
            <person name="Liu S.X."/>
            <person name="Liu Z.A."/>
            <person name="Luros J.S."/>
            <person name="Maiti R."/>
            <person name="Marziali A."/>
            <person name="Militscher J."/>
            <person name="Miranda M."/>
            <person name="Nguyen M."/>
            <person name="Nierman W.C."/>
            <person name="Osborne B.I."/>
            <person name="Pai G."/>
            <person name="Peterson J."/>
            <person name="Pham P.K."/>
            <person name="Rizzo M."/>
            <person name="Rooney T."/>
            <person name="Rowley D."/>
            <person name="Sakano H."/>
            <person name="Salzberg S.L."/>
            <person name="Schwartz J.R."/>
            <person name="Shinn P."/>
            <person name="Southwick A.M."/>
            <person name="Sun H."/>
            <person name="Tallon L.J."/>
            <person name="Tambunga G."/>
            <person name="Toriumi M.J."/>
            <person name="Town C.D."/>
            <person name="Utterback T."/>
            <person name="Van Aken S."/>
            <person name="Vaysberg M."/>
            <person name="Vysotskaia V.S."/>
            <person name="Walker M."/>
            <person name="Wu D."/>
            <person name="Yu G."/>
            <person name="Fraser C.M."/>
            <person name="Venter J.C."/>
            <person name="Davis R.W."/>
        </authorList>
    </citation>
    <scope>NUCLEOTIDE SEQUENCE [LARGE SCALE GENOMIC DNA]</scope>
    <source>
        <strain>cv. Columbia</strain>
    </source>
</reference>
<reference key="4">
    <citation type="journal article" date="2017" name="Plant J.">
        <title>Araport11: a complete reannotation of the Arabidopsis thaliana reference genome.</title>
        <authorList>
            <person name="Cheng C.Y."/>
            <person name="Krishnakumar V."/>
            <person name="Chan A.P."/>
            <person name="Thibaud-Nissen F."/>
            <person name="Schobel S."/>
            <person name="Town C.D."/>
        </authorList>
    </citation>
    <scope>GENOME REANNOTATION</scope>
    <source>
        <strain>cv. Columbia</strain>
    </source>
</reference>
<reference key="5">
    <citation type="journal article" date="2003" name="Science">
        <title>Empirical analysis of transcriptional activity in the Arabidopsis genome.</title>
        <authorList>
            <person name="Yamada K."/>
            <person name="Lim J."/>
            <person name="Dale J.M."/>
            <person name="Chen H."/>
            <person name="Shinn P."/>
            <person name="Palm C.J."/>
            <person name="Southwick A.M."/>
            <person name="Wu H.C."/>
            <person name="Kim C.J."/>
            <person name="Nguyen M."/>
            <person name="Pham P.K."/>
            <person name="Cheuk R.F."/>
            <person name="Karlin-Newmann G."/>
            <person name="Liu S.X."/>
            <person name="Lam B."/>
            <person name="Sakano H."/>
            <person name="Wu T."/>
            <person name="Yu G."/>
            <person name="Miranda M."/>
            <person name="Quach H.L."/>
            <person name="Tripp M."/>
            <person name="Chang C.H."/>
            <person name="Lee J.M."/>
            <person name="Toriumi M.J."/>
            <person name="Chan M.M."/>
            <person name="Tang C.C."/>
            <person name="Onodera C.S."/>
            <person name="Deng J.M."/>
            <person name="Akiyama K."/>
            <person name="Ansari Y."/>
            <person name="Arakawa T."/>
            <person name="Banh J."/>
            <person name="Banno F."/>
            <person name="Bowser L."/>
            <person name="Brooks S.Y."/>
            <person name="Carninci P."/>
            <person name="Chao Q."/>
            <person name="Choy N."/>
            <person name="Enju A."/>
            <person name="Goldsmith A.D."/>
            <person name="Gurjal M."/>
            <person name="Hansen N.F."/>
            <person name="Hayashizaki Y."/>
            <person name="Johnson-Hopson C."/>
            <person name="Hsuan V.W."/>
            <person name="Iida K."/>
            <person name="Karnes M."/>
            <person name="Khan S."/>
            <person name="Koesema E."/>
            <person name="Ishida J."/>
            <person name="Jiang P.X."/>
            <person name="Jones T."/>
            <person name="Kawai J."/>
            <person name="Kamiya A."/>
            <person name="Meyers C."/>
            <person name="Nakajima M."/>
            <person name="Narusaka M."/>
            <person name="Seki M."/>
            <person name="Sakurai T."/>
            <person name="Satou M."/>
            <person name="Tamse R."/>
            <person name="Vaysberg M."/>
            <person name="Wallender E.K."/>
            <person name="Wong C."/>
            <person name="Yamamura Y."/>
            <person name="Yuan S."/>
            <person name="Shinozaki K."/>
            <person name="Davis R.W."/>
            <person name="Theologis A."/>
            <person name="Ecker J.R."/>
        </authorList>
    </citation>
    <scope>NUCLEOTIDE SEQUENCE [LARGE SCALE MRNA] (ISOFORMS 1 AND 3)</scope>
    <source>
        <strain>cv. Columbia</strain>
    </source>
</reference>
<reference key="6">
    <citation type="submission" date="2005-03" db="EMBL/GenBank/DDBJ databases">
        <title>Large-scale analysis of RIKEN Arabidopsis full-length (RAFL) cDNAs.</title>
        <authorList>
            <person name="Totoki Y."/>
            <person name="Seki M."/>
            <person name="Ishida J."/>
            <person name="Nakajima M."/>
            <person name="Enju A."/>
            <person name="Kamiya A."/>
            <person name="Narusaka M."/>
            <person name="Shin-i T."/>
            <person name="Nakagawa M."/>
            <person name="Sakamoto N."/>
            <person name="Oishi K."/>
            <person name="Kohara Y."/>
            <person name="Kobayashi M."/>
            <person name="Toyoda A."/>
            <person name="Sakaki Y."/>
            <person name="Sakurai T."/>
            <person name="Iida K."/>
            <person name="Akiyama K."/>
            <person name="Satou M."/>
            <person name="Toyoda T."/>
            <person name="Konagaya A."/>
            <person name="Carninci P."/>
            <person name="Kawai J."/>
            <person name="Hayashizaki Y."/>
            <person name="Shinozaki K."/>
        </authorList>
    </citation>
    <scope>NUCLEOTIDE SEQUENCE [LARGE SCALE MRNA] OF 447-608 (ISOFORM 3)</scope>
    <source>
        <strain>cv. Columbia</strain>
    </source>
</reference>
<reference key="7">
    <citation type="journal article" date="1999" name="Gene">
        <title>Plant MAP kinase kinase kinases structure, classification and evolution.</title>
        <authorList>
            <person name="Jouannic C."/>
            <person name="Hamal A."/>
            <person name="Leprince A.-S."/>
            <person name="Tregear J."/>
            <person name="Kreis M."/>
            <person name="Henry Y."/>
        </authorList>
    </citation>
    <scope>GENE FAMILY</scope>
    <source>
        <strain>cv. Columbia</strain>
    </source>
</reference>
<reference key="8">
    <citation type="journal article" date="2002" name="Trends Plant Sci.">
        <title>Mitogen-activated protein kinase cascades in plants: a new nomenclature.</title>
        <authorList>
            <consortium name="MAPK group"/>
        </authorList>
    </citation>
    <scope>GENE FAMILY</scope>
</reference>
<reference key="9">
    <citation type="journal article" date="2009" name="Plant Physiol.">
        <title>Large-scale Arabidopsis phosphoproteome profiling reveals novel chloroplast kinase substrates and phosphorylation networks.</title>
        <authorList>
            <person name="Reiland S."/>
            <person name="Messerli G."/>
            <person name="Baerenfaller K."/>
            <person name="Gerrits B."/>
            <person name="Endler A."/>
            <person name="Grossmann J."/>
            <person name="Gruissem W."/>
            <person name="Baginsky S."/>
        </authorList>
    </citation>
    <scope>IDENTIFICATION BY MASS SPECTROMETRY [LARGE SCALE ANALYSIS]</scope>
</reference>
<reference key="10">
    <citation type="journal article" date="2016" name="EMBO J.">
        <title>The Arabidopsis CERK1-associated kinase PBL27 connects chitin perception to MAPK activation.</title>
        <authorList>
            <person name="Yamada K."/>
            <person name="Yamaguchi K."/>
            <person name="Shirakawa T."/>
            <person name="Nakagami H."/>
            <person name="Mine A."/>
            <person name="Ishikawa K."/>
            <person name="Fujiwara M."/>
            <person name="Narusaka M."/>
            <person name="Narusaka Y."/>
            <person name="Ichimura K."/>
            <person name="Kobayashi Y."/>
            <person name="Matsui H."/>
            <person name="Nomura Y."/>
            <person name="Nomoto M."/>
            <person name="Tada Y."/>
            <person name="Fukao Y."/>
            <person name="Fukamizo T."/>
            <person name="Tsuda K."/>
            <person name="Shirasu K."/>
            <person name="Shibuya N."/>
            <person name="Kawasaki T."/>
        </authorList>
    </citation>
    <scope>INTERACTION WITH PBL27</scope>
    <source>
        <strain>cv. Columbia</strain>
    </source>
</reference>
<gene>
    <name evidence="7" type="primary">MAPKKK3</name>
    <name evidence="8" type="synonym">MAP3KA</name>
    <name evidence="10" type="ordered locus">At1g53570</name>
    <name evidence="12" type="ORF">F22G10.18</name>
    <name evidence="11" type="ORF">T3F20.12</name>
</gene>
<protein>
    <recommendedName>
        <fullName evidence="7">Mitogen-activated protein kinase kinase kinase 3</fullName>
        <ecNumber evidence="1">2.7.11.25</ecNumber>
    </recommendedName>
    <alternativeName>
        <fullName evidence="6">MAP3K alpha protein kinase</fullName>
        <shortName evidence="6">AtMAP3Kalpha</shortName>
    </alternativeName>
</protein>
<name>M3K3A_ARATH</name>
<accession>F4HRJ4</accession>
<accession>F4HRJ5</accession>
<accession>F4HRJ8</accession>
<accession>O82649</accession>
<accession>Q56ZS2</accession>
<accession>Q8W582</accession>
<accession>Q9LPH2</accession>
<accession>Q9ZRF7</accession>
<feature type="chain" id="PRO_0000438542" description="Mitogen-activated protein kinase kinase kinase 3">
    <location>
        <begin position="1"/>
        <end position="609"/>
    </location>
</feature>
<feature type="domain" description="Protein kinase" evidence="2">
    <location>
        <begin position="214"/>
        <end position="470"/>
    </location>
</feature>
<feature type="region of interest" description="Disordered" evidence="3">
    <location>
        <begin position="1"/>
        <end position="202"/>
    </location>
</feature>
<feature type="region of interest" description="Disordered" evidence="3">
    <location>
        <begin position="487"/>
        <end position="511"/>
    </location>
</feature>
<feature type="region of interest" description="Disordered" evidence="3">
    <location>
        <begin position="590"/>
        <end position="609"/>
    </location>
</feature>
<feature type="compositionally biased region" description="Basic and acidic residues" evidence="3">
    <location>
        <begin position="11"/>
        <end position="28"/>
    </location>
</feature>
<feature type="compositionally biased region" description="Low complexity" evidence="3">
    <location>
        <begin position="40"/>
        <end position="64"/>
    </location>
</feature>
<feature type="compositionally biased region" description="Low complexity" evidence="3">
    <location>
        <begin position="90"/>
        <end position="108"/>
    </location>
</feature>
<feature type="compositionally biased region" description="Polar residues" evidence="3">
    <location>
        <begin position="594"/>
        <end position="609"/>
    </location>
</feature>
<feature type="active site" description="Proton acceptor" evidence="2">
    <location>
        <position position="339"/>
    </location>
</feature>
<feature type="binding site" evidence="2">
    <location>
        <begin position="220"/>
        <end position="228"/>
    </location>
    <ligand>
        <name>ATP</name>
        <dbReference type="ChEBI" id="CHEBI:30616"/>
    </ligand>
</feature>
<feature type="binding site" evidence="2">
    <location>
        <position position="243"/>
    </location>
    <ligand>
        <name>ATP</name>
        <dbReference type="ChEBI" id="CHEBI:30616"/>
    </ligand>
</feature>
<feature type="splice variant" id="VSP_058679" description="In isoform 4.">
    <location>
        <begin position="347"/>
        <end position="372"/>
    </location>
</feature>
<feature type="splice variant" id="VSP_058680" description="In isoform 3.">
    <location>
        <position position="497"/>
    </location>
</feature>
<feature type="splice variant" id="VSP_058681" description="In isoform 2.">
    <location>
        <position position="525"/>
    </location>
</feature>
<feature type="sequence conflict" description="In Ref. 1; AAD10848 and 2; CAA08994." evidence="9" ref="1 2">
    <location>
        <position position="32"/>
    </location>
</feature>
<feature type="sequence conflict" description="In Ref. 5; AAL31904." evidence="9" ref="5">
    <original>S</original>
    <variation>P</variation>
    <location>
        <position position="105"/>
    </location>
</feature>
<feature type="sequence conflict" description="In Ref. 1; AAD10848 and 2; CAA08994." evidence="9" ref="1 2">
    <original>A</original>
    <variation>P</variation>
    <location>
        <position position="531"/>
    </location>
</feature>
<proteinExistence type="evidence at protein level"/>
<sequence>MPTWWGRKSCKNKDDNHRGIISTDRDIKSSAVVVDPPLTPTRGGTPRCSREFAGASSAFSGFDSDSTEKKGHPLPRPLLSPVSIHHQDHVSGSTSGSTSVSSVSSSGSADDQSQLVASRGRGDVKFNVAAAPRSPERVSPKAATITTRPTSPRHQRLSGVVSLESSTGRNDDGRSSSECHPLPRPPTSPTSPSAVHGSRIGGGYETSPSGFSTWKKGKFLGSGTFGQVYLGFNSEKGKMCAIKEVKVISDDQTSKECLKQLNQEINLLNQLCHPNIVQYYGSELSEETLSVYLEYVSGGSIHKLLKDYGSFTEPVIQNYTRQILAGLAYLHGRNTVHRDIKGANILVDPNGEIKLADFGMAKHVTAFSTMLSFKGSPYWMAPEVVMSQNGYTHAVDIWSLGCTILEMATSKPPWSQFEGVAAIFKIGNSKDTPEIPDHLSNDAKNFIRLCLQRNPTVRPTASQLLEHPFLRNTTRVASTSLPKDFPPRSYDGNFSLQPTREPYPGRLSHDNYAKQPLSRTIKSPSRENVRAITSLPVSPCSSPLRQLGPAYKSCFLSPPHPSYAFPGQDSGYNLAEFAASPFRMKKDAMMEPSSFRTQTPNSPLRSRLV</sequence>
<evidence type="ECO:0000250" key="1">
    <source>
        <dbReference type="UniProtKB" id="Q9C5H5"/>
    </source>
</evidence>
<evidence type="ECO:0000255" key="2">
    <source>
        <dbReference type="PROSITE-ProRule" id="PRU00159"/>
    </source>
</evidence>
<evidence type="ECO:0000256" key="3">
    <source>
        <dbReference type="SAM" id="MobiDB-lite"/>
    </source>
</evidence>
<evidence type="ECO:0000269" key="4">
    <source>
    </source>
</evidence>
<evidence type="ECO:0000269" key="5">
    <source>
    </source>
</evidence>
<evidence type="ECO:0000303" key="6">
    <source>
    </source>
</evidence>
<evidence type="ECO:0000303" key="7">
    <source>
    </source>
</evidence>
<evidence type="ECO:0000303" key="8">
    <source ref="1"/>
</evidence>
<evidence type="ECO:0000305" key="9"/>
<evidence type="ECO:0000312" key="10">
    <source>
        <dbReference type="Araport" id="AT1G53570"/>
    </source>
</evidence>
<evidence type="ECO:0000312" key="11">
    <source>
        <dbReference type="EMBL" id="AAF78433.1"/>
    </source>
</evidence>
<evidence type="ECO:0000312" key="12">
    <source>
        <dbReference type="EMBL" id="AAG51965.1"/>
    </source>
</evidence>
<dbReference type="EC" id="2.7.11.25" evidence="1"/>
<dbReference type="EMBL" id="U58918">
    <property type="protein sequence ID" value="AAD10848.1"/>
    <property type="molecule type" value="mRNA"/>
</dbReference>
<dbReference type="EMBL" id="AJ010090">
    <property type="protein sequence ID" value="CAA08994.1"/>
    <property type="molecule type" value="mRNA"/>
</dbReference>
<dbReference type="EMBL" id="AC018748">
    <property type="protein sequence ID" value="AAF78433.1"/>
    <property type="molecule type" value="Genomic_DNA"/>
</dbReference>
<dbReference type="EMBL" id="AC024260">
    <property type="protein sequence ID" value="AAG51965.1"/>
    <property type="molecule type" value="Genomic_DNA"/>
</dbReference>
<dbReference type="EMBL" id="CP002684">
    <property type="protein sequence ID" value="AEE32960.1"/>
    <property type="molecule type" value="Genomic_DNA"/>
</dbReference>
<dbReference type="EMBL" id="CP002684">
    <property type="protein sequence ID" value="AEE32961.1"/>
    <property type="molecule type" value="Genomic_DNA"/>
</dbReference>
<dbReference type="EMBL" id="CP002684">
    <property type="protein sequence ID" value="AEE32962.1"/>
    <property type="molecule type" value="Genomic_DNA"/>
</dbReference>
<dbReference type="EMBL" id="CP002684">
    <property type="protein sequence ID" value="AEE32963.1"/>
    <property type="molecule type" value="Genomic_DNA"/>
</dbReference>
<dbReference type="EMBL" id="CP002684">
    <property type="protein sequence ID" value="AEE32964.1"/>
    <property type="molecule type" value="Genomic_DNA"/>
</dbReference>
<dbReference type="EMBL" id="AF419572">
    <property type="protein sequence ID" value="AAL31904.1"/>
    <property type="molecule type" value="mRNA"/>
</dbReference>
<dbReference type="EMBL" id="AY140005">
    <property type="protein sequence ID" value="AAM98147.1"/>
    <property type="molecule type" value="mRNA"/>
</dbReference>
<dbReference type="EMBL" id="BT002598">
    <property type="protein sequence ID" value="AAO00958.1"/>
    <property type="molecule type" value="mRNA"/>
</dbReference>
<dbReference type="EMBL" id="AK220889">
    <property type="protein sequence ID" value="BAD94298.1"/>
    <property type="molecule type" value="mRNA"/>
</dbReference>
<dbReference type="PIR" id="G96575">
    <property type="entry name" value="G96575"/>
</dbReference>
<dbReference type="PIR" id="T51625">
    <property type="entry name" value="T51625"/>
</dbReference>
<dbReference type="RefSeq" id="NP_001031181.1">
    <molecule id="F4HRJ4-3"/>
    <property type="nucleotide sequence ID" value="NM_001036104.2"/>
</dbReference>
<dbReference type="RefSeq" id="NP_001185211.1">
    <molecule id="F4HRJ4-2"/>
    <property type="nucleotide sequence ID" value="NM_001198282.1"/>
</dbReference>
<dbReference type="RefSeq" id="NP_001185212.1">
    <molecule id="F4HRJ4-4"/>
    <property type="nucleotide sequence ID" value="NM_001198283.1"/>
</dbReference>
<dbReference type="RefSeq" id="NP_564635.1">
    <molecule id="F4HRJ4-1"/>
    <property type="nucleotide sequence ID" value="NM_104235.4"/>
</dbReference>
<dbReference type="RefSeq" id="NP_849803.1">
    <molecule id="F4HRJ4-3"/>
    <property type="nucleotide sequence ID" value="NM_179472.3"/>
</dbReference>
<dbReference type="SMR" id="F4HRJ4"/>
<dbReference type="FunCoup" id="F4HRJ4">
    <property type="interactions" value="3212"/>
</dbReference>
<dbReference type="STRING" id="3702.F4HRJ4"/>
<dbReference type="GlyGen" id="F4HRJ4">
    <property type="glycosylation" value="1 site"/>
</dbReference>
<dbReference type="iPTMnet" id="F4HRJ4"/>
<dbReference type="PaxDb" id="3702-AT1G53570.1"/>
<dbReference type="ProteomicsDB" id="238841">
    <molecule id="F4HRJ4-1"/>
</dbReference>
<dbReference type="EnsemblPlants" id="AT1G53570.1">
    <molecule id="F4HRJ4-1"/>
    <property type="protein sequence ID" value="AT1G53570.1"/>
    <property type="gene ID" value="AT1G53570"/>
</dbReference>
<dbReference type="EnsemblPlants" id="AT1G53570.2">
    <molecule id="F4HRJ4-3"/>
    <property type="protein sequence ID" value="AT1G53570.2"/>
    <property type="gene ID" value="AT1G53570"/>
</dbReference>
<dbReference type="EnsemblPlants" id="AT1G53570.3">
    <molecule id="F4HRJ4-3"/>
    <property type="protein sequence ID" value="AT1G53570.3"/>
    <property type="gene ID" value="AT1G53570"/>
</dbReference>
<dbReference type="EnsemblPlants" id="AT1G53570.4">
    <molecule id="F4HRJ4-2"/>
    <property type="protein sequence ID" value="AT1G53570.4"/>
    <property type="gene ID" value="AT1G53570"/>
</dbReference>
<dbReference type="EnsemblPlants" id="AT1G53570.5">
    <molecule id="F4HRJ4-4"/>
    <property type="protein sequence ID" value="AT1G53570.5"/>
    <property type="gene ID" value="AT1G53570"/>
</dbReference>
<dbReference type="GeneID" id="841792"/>
<dbReference type="Gramene" id="AT1G53570.1">
    <molecule id="F4HRJ4-1"/>
    <property type="protein sequence ID" value="AT1G53570.1"/>
    <property type="gene ID" value="AT1G53570"/>
</dbReference>
<dbReference type="Gramene" id="AT1G53570.2">
    <molecule id="F4HRJ4-3"/>
    <property type="protein sequence ID" value="AT1G53570.2"/>
    <property type="gene ID" value="AT1G53570"/>
</dbReference>
<dbReference type="Gramene" id="AT1G53570.3">
    <molecule id="F4HRJ4-3"/>
    <property type="protein sequence ID" value="AT1G53570.3"/>
    <property type="gene ID" value="AT1G53570"/>
</dbReference>
<dbReference type="Gramene" id="AT1G53570.4">
    <molecule id="F4HRJ4-2"/>
    <property type="protein sequence ID" value="AT1G53570.4"/>
    <property type="gene ID" value="AT1G53570"/>
</dbReference>
<dbReference type="Gramene" id="AT1G53570.5">
    <molecule id="F4HRJ4-4"/>
    <property type="protein sequence ID" value="AT1G53570.5"/>
    <property type="gene ID" value="AT1G53570"/>
</dbReference>
<dbReference type="KEGG" id="ath:AT1G53570"/>
<dbReference type="Araport" id="AT1G53570"/>
<dbReference type="TAIR" id="AT1G53570">
    <property type="gene designation" value="MAP3KA"/>
</dbReference>
<dbReference type="eggNOG" id="KOG0198">
    <property type="taxonomic scope" value="Eukaryota"/>
</dbReference>
<dbReference type="InParanoid" id="F4HRJ4"/>
<dbReference type="OrthoDB" id="266718at2759"/>
<dbReference type="PhylomeDB" id="F4HRJ4"/>
<dbReference type="PRO" id="PR:F4HRJ4"/>
<dbReference type="Proteomes" id="UP000006548">
    <property type="component" value="Chromosome 1"/>
</dbReference>
<dbReference type="ExpressionAtlas" id="F4HRJ4">
    <property type="expression patterns" value="baseline and differential"/>
</dbReference>
<dbReference type="GO" id="GO:0005524">
    <property type="term" value="F:ATP binding"/>
    <property type="evidence" value="ECO:0007669"/>
    <property type="project" value="UniProtKB-KW"/>
</dbReference>
<dbReference type="GO" id="GO:0004709">
    <property type="term" value="F:MAP kinase kinase kinase activity"/>
    <property type="evidence" value="ECO:0007669"/>
    <property type="project" value="UniProtKB-EC"/>
</dbReference>
<dbReference type="GO" id="GO:0106310">
    <property type="term" value="F:protein serine kinase activity"/>
    <property type="evidence" value="ECO:0007669"/>
    <property type="project" value="RHEA"/>
</dbReference>
<dbReference type="GO" id="GO:0002221">
    <property type="term" value="P:pattern recognition receptor signaling pathway"/>
    <property type="evidence" value="ECO:0000316"/>
    <property type="project" value="TAIR"/>
</dbReference>
<dbReference type="GO" id="GO:1900424">
    <property type="term" value="P:regulation of defense response to bacterium"/>
    <property type="evidence" value="ECO:0000316"/>
    <property type="project" value="TAIR"/>
</dbReference>
<dbReference type="GO" id="GO:1900150">
    <property type="term" value="P:regulation of defense response to fungus"/>
    <property type="evidence" value="ECO:0000316"/>
    <property type="project" value="TAIR"/>
</dbReference>
<dbReference type="CDD" id="cd06632">
    <property type="entry name" value="STKc_MEKK1_plant"/>
    <property type="match status" value="1"/>
</dbReference>
<dbReference type="FunFam" id="1.10.510.10:FF:000186">
    <property type="entry name" value="Mitogen-activated protein kinase kinase kinase"/>
    <property type="match status" value="1"/>
</dbReference>
<dbReference type="Gene3D" id="1.10.510.10">
    <property type="entry name" value="Transferase(Phosphotransferase) domain 1"/>
    <property type="match status" value="1"/>
</dbReference>
<dbReference type="InterPro" id="IPR011009">
    <property type="entry name" value="Kinase-like_dom_sf"/>
</dbReference>
<dbReference type="InterPro" id="IPR050538">
    <property type="entry name" value="MAP_kinase_kinase_kinase"/>
</dbReference>
<dbReference type="InterPro" id="IPR000719">
    <property type="entry name" value="Prot_kinase_dom"/>
</dbReference>
<dbReference type="InterPro" id="IPR017441">
    <property type="entry name" value="Protein_kinase_ATP_BS"/>
</dbReference>
<dbReference type="PANTHER" id="PTHR48016">
    <property type="entry name" value="MAP KINASE KINASE KINASE SSK2-RELATED-RELATED"/>
    <property type="match status" value="1"/>
</dbReference>
<dbReference type="PANTHER" id="PTHR48016:SF8">
    <property type="entry name" value="MITOGEN-ACTIVATED PROTEIN KINASE KINASE KINASE 3"/>
    <property type="match status" value="1"/>
</dbReference>
<dbReference type="Pfam" id="PF00069">
    <property type="entry name" value="Pkinase"/>
    <property type="match status" value="1"/>
</dbReference>
<dbReference type="SMART" id="SM00220">
    <property type="entry name" value="S_TKc"/>
    <property type="match status" value="1"/>
</dbReference>
<dbReference type="SUPFAM" id="SSF56112">
    <property type="entry name" value="Protein kinase-like (PK-like)"/>
    <property type="match status" value="1"/>
</dbReference>
<dbReference type="PROSITE" id="PS00107">
    <property type="entry name" value="PROTEIN_KINASE_ATP"/>
    <property type="match status" value="1"/>
</dbReference>
<dbReference type="PROSITE" id="PS50011">
    <property type="entry name" value="PROTEIN_KINASE_DOM"/>
    <property type="match status" value="1"/>
</dbReference>
<comment type="catalytic activity">
    <reaction evidence="1">
        <text>L-seryl-[protein] + ATP = O-phospho-L-seryl-[protein] + ADP + H(+)</text>
        <dbReference type="Rhea" id="RHEA:17989"/>
        <dbReference type="Rhea" id="RHEA-COMP:9863"/>
        <dbReference type="Rhea" id="RHEA-COMP:11604"/>
        <dbReference type="ChEBI" id="CHEBI:15378"/>
        <dbReference type="ChEBI" id="CHEBI:29999"/>
        <dbReference type="ChEBI" id="CHEBI:30616"/>
        <dbReference type="ChEBI" id="CHEBI:83421"/>
        <dbReference type="ChEBI" id="CHEBI:456216"/>
        <dbReference type="EC" id="2.7.11.25"/>
    </reaction>
</comment>
<comment type="catalytic activity">
    <reaction evidence="1">
        <text>L-threonyl-[protein] + ATP = O-phospho-L-threonyl-[protein] + ADP + H(+)</text>
        <dbReference type="Rhea" id="RHEA:46608"/>
        <dbReference type="Rhea" id="RHEA-COMP:11060"/>
        <dbReference type="Rhea" id="RHEA-COMP:11605"/>
        <dbReference type="ChEBI" id="CHEBI:15378"/>
        <dbReference type="ChEBI" id="CHEBI:30013"/>
        <dbReference type="ChEBI" id="CHEBI:30616"/>
        <dbReference type="ChEBI" id="CHEBI:61977"/>
        <dbReference type="ChEBI" id="CHEBI:456216"/>
        <dbReference type="EC" id="2.7.11.25"/>
    </reaction>
</comment>
<comment type="subunit">
    <text evidence="5">Interacts with PBL27.</text>
</comment>
<comment type="alternative products">
    <event type="alternative splicing"/>
    <isoform>
        <id>F4HRJ4-1</id>
        <name>1</name>
        <sequence type="displayed"/>
    </isoform>
    <isoform>
        <id>F4HRJ4-2</id>
        <name>2</name>
        <sequence type="described" ref="VSP_058681"/>
    </isoform>
    <isoform>
        <id>F4HRJ4-3</id>
        <name>3</name>
        <sequence type="described" ref="VSP_058680"/>
    </isoform>
    <isoform>
        <id>F4HRJ4-4</id>
        <name>4</name>
        <sequence type="described" ref="VSP_058679"/>
    </isoform>
</comment>
<comment type="tissue specificity">
    <text evidence="4">Expressed in flower buds, roots, leaves, seedlings, stems and immature siliques. Absent of mature pollen.</text>
</comment>
<comment type="similarity">
    <text evidence="9">Belongs to the protein kinase superfamily. STE Ser/Thr protein kinase family. MAP kinase kinase kinase subfamily.</text>
</comment>